<evidence type="ECO:0000255" key="1">
    <source>
        <dbReference type="HAMAP-Rule" id="MF_00753"/>
    </source>
</evidence>
<name>GLPB_KLEP7</name>
<reference key="1">
    <citation type="submission" date="2006-09" db="EMBL/GenBank/DDBJ databases">
        <authorList>
            <consortium name="The Klebsiella pneumonia Genome Sequencing Project"/>
            <person name="McClelland M."/>
            <person name="Sanderson E.K."/>
            <person name="Spieth J."/>
            <person name="Clifton W.S."/>
            <person name="Latreille P."/>
            <person name="Sabo A."/>
            <person name="Pepin K."/>
            <person name="Bhonagiri V."/>
            <person name="Porwollik S."/>
            <person name="Ali J."/>
            <person name="Wilson R.K."/>
        </authorList>
    </citation>
    <scope>NUCLEOTIDE SEQUENCE [LARGE SCALE GENOMIC DNA]</scope>
    <source>
        <strain>ATCC 700721 / MGH 78578</strain>
    </source>
</reference>
<proteinExistence type="inferred from homology"/>
<protein>
    <recommendedName>
        <fullName evidence="1">Anaerobic glycerol-3-phosphate dehydrogenase subunit B</fullName>
        <shortName evidence="1">Anaerobic G-3-P dehydrogenase subunit B</shortName>
        <shortName evidence="1">Anaerobic G3Pdhase B</shortName>
        <ecNumber evidence="1">1.1.5.3</ecNumber>
    </recommendedName>
</protein>
<accession>A6TBU4</accession>
<keyword id="KW-0285">Flavoprotein</keyword>
<keyword id="KW-0288">FMN</keyword>
<keyword id="KW-0560">Oxidoreductase</keyword>
<dbReference type="EC" id="1.1.5.3" evidence="1"/>
<dbReference type="EMBL" id="CP000647">
    <property type="protein sequence ID" value="ABR78065.1"/>
    <property type="molecule type" value="Genomic_DNA"/>
</dbReference>
<dbReference type="RefSeq" id="WP_015958752.1">
    <property type="nucleotide sequence ID" value="NC_009648.1"/>
</dbReference>
<dbReference type="STRING" id="272620.KPN_02648"/>
<dbReference type="PaxDb" id="272620-KPN_02648"/>
<dbReference type="EnsemblBacteria" id="ABR78065">
    <property type="protein sequence ID" value="ABR78065"/>
    <property type="gene ID" value="KPN_02648"/>
</dbReference>
<dbReference type="KEGG" id="kpn:KPN_02648"/>
<dbReference type="HOGENOM" id="CLU_047793_0_0_6"/>
<dbReference type="UniPathway" id="UPA00618">
    <property type="reaction ID" value="UER00673"/>
</dbReference>
<dbReference type="Proteomes" id="UP000000265">
    <property type="component" value="Chromosome"/>
</dbReference>
<dbReference type="GO" id="GO:0009331">
    <property type="term" value="C:glycerol-3-phosphate dehydrogenase (FAD) complex"/>
    <property type="evidence" value="ECO:0007669"/>
    <property type="project" value="InterPro"/>
</dbReference>
<dbReference type="GO" id="GO:0004368">
    <property type="term" value="F:glycerol-3-phosphate dehydrogenase (quinone) activity"/>
    <property type="evidence" value="ECO:0007669"/>
    <property type="project" value="UniProtKB-UniRule"/>
</dbReference>
<dbReference type="GO" id="GO:0019563">
    <property type="term" value="P:glycerol catabolic process"/>
    <property type="evidence" value="ECO:0007669"/>
    <property type="project" value="UniProtKB-UniRule"/>
</dbReference>
<dbReference type="Gene3D" id="3.50.50.60">
    <property type="entry name" value="FAD/NAD(P)-binding domain"/>
    <property type="match status" value="1"/>
</dbReference>
<dbReference type="HAMAP" id="MF_00753">
    <property type="entry name" value="Glycerol3P_GlpB"/>
    <property type="match status" value="1"/>
</dbReference>
<dbReference type="InterPro" id="IPR003953">
    <property type="entry name" value="FAD-dep_OxRdtase_2_FAD-bd"/>
</dbReference>
<dbReference type="InterPro" id="IPR036188">
    <property type="entry name" value="FAD/NAD-bd_sf"/>
</dbReference>
<dbReference type="InterPro" id="IPR009158">
    <property type="entry name" value="G3P_DH_GlpB_su"/>
</dbReference>
<dbReference type="NCBIfam" id="TIGR03378">
    <property type="entry name" value="glycerol3P_GlpB"/>
    <property type="match status" value="1"/>
</dbReference>
<dbReference type="NCBIfam" id="NF003718">
    <property type="entry name" value="PRK05329.1-1"/>
    <property type="match status" value="1"/>
</dbReference>
<dbReference type="NCBIfam" id="NF003719">
    <property type="entry name" value="PRK05329.1-2"/>
    <property type="match status" value="1"/>
</dbReference>
<dbReference type="NCBIfam" id="NF003720">
    <property type="entry name" value="PRK05329.1-3"/>
    <property type="match status" value="1"/>
</dbReference>
<dbReference type="Pfam" id="PF00890">
    <property type="entry name" value="FAD_binding_2"/>
    <property type="match status" value="1"/>
</dbReference>
<dbReference type="PIRSF" id="PIRSF000141">
    <property type="entry name" value="Anaerobic_G3P_dh"/>
    <property type="match status" value="1"/>
</dbReference>
<dbReference type="SUPFAM" id="SSF51905">
    <property type="entry name" value="FAD/NAD(P)-binding domain"/>
    <property type="match status" value="1"/>
</dbReference>
<sequence length="419" mass="45106">MKFDCAIIGGGLAGLLCGLALNQHGLRSVIISRGQSALHFSSASLDLLSALPNGDHVTDVAQGLQQLAEQLPEHPYSRLGAEAVLKYATQTEALLAACGAVMQGDARRPHRRVTPLGTLRPAWLSPLEVPVAPLPSQGACLVGISGFADFQPHLAAAALGQHGVTAAAVEIELPLLDVLRDNPTEFRAANIARVLDDENMWPALHAALLPLAQQYDLLIMPACFGLADDRLYHWLQARLPCPLRLLPTLPPSVPGMRLHSQLQRQFIREGGAWLAGDEVVKISHRQDAVEAVWTRNHGDIALRPRFTVLASGSFFSNGLVATRDSVREPILGLDLHQTLPRESWYQRDFFASQPWQRFGVKTDALLRPLLGGQPFHNLFAIGSLLGGFDAIQLGCGGGVCAVTALHAARQIHALAGGRP</sequence>
<gene>
    <name evidence="1" type="primary">glpB</name>
    <name type="ordered locus">KPN78578_26040</name>
    <name type="ORF">KPN_02648</name>
</gene>
<organism>
    <name type="scientific">Klebsiella pneumoniae subsp. pneumoniae (strain ATCC 700721 / MGH 78578)</name>
    <dbReference type="NCBI Taxonomy" id="272620"/>
    <lineage>
        <taxon>Bacteria</taxon>
        <taxon>Pseudomonadati</taxon>
        <taxon>Pseudomonadota</taxon>
        <taxon>Gammaproteobacteria</taxon>
        <taxon>Enterobacterales</taxon>
        <taxon>Enterobacteriaceae</taxon>
        <taxon>Klebsiella/Raoultella group</taxon>
        <taxon>Klebsiella</taxon>
        <taxon>Klebsiella pneumoniae complex</taxon>
    </lineage>
</organism>
<feature type="chain" id="PRO_1000046607" description="Anaerobic glycerol-3-phosphate dehydrogenase subunit B">
    <location>
        <begin position="1"/>
        <end position="419"/>
    </location>
</feature>
<comment type="function">
    <text evidence="1">Conversion of glycerol 3-phosphate to dihydroxyacetone. Uses fumarate or nitrate as electron acceptor.</text>
</comment>
<comment type="catalytic activity">
    <reaction evidence="1">
        <text>a quinone + sn-glycerol 3-phosphate = dihydroxyacetone phosphate + a quinol</text>
        <dbReference type="Rhea" id="RHEA:18977"/>
        <dbReference type="ChEBI" id="CHEBI:24646"/>
        <dbReference type="ChEBI" id="CHEBI:57597"/>
        <dbReference type="ChEBI" id="CHEBI:57642"/>
        <dbReference type="ChEBI" id="CHEBI:132124"/>
        <dbReference type="EC" id="1.1.5.3"/>
    </reaction>
</comment>
<comment type="cofactor">
    <cofactor evidence="1">
        <name>FMN</name>
        <dbReference type="ChEBI" id="CHEBI:58210"/>
    </cofactor>
</comment>
<comment type="pathway">
    <text evidence="1">Polyol metabolism; glycerol degradation via glycerol kinase pathway; glycerone phosphate from sn-glycerol 3-phosphate (anaerobic route): step 1/1.</text>
</comment>
<comment type="subunit">
    <text evidence="1">Composed of a catalytic GlpA/B dimer and of membrane bound GlpC.</text>
</comment>
<comment type="similarity">
    <text evidence="1">Belongs to the anaerobic G-3-P dehydrogenase subunit B family.</text>
</comment>